<comment type="function">
    <text evidence="2">Serine protease which preferentially hydrolyzes peptides with Arg at the P1 position.</text>
</comment>
<comment type="subunit">
    <text evidence="1">Forms a heterodimer with SERPINA5.</text>
</comment>
<comment type="subcellular location">
    <subcellularLocation>
        <location evidence="2">Cell membrane</location>
        <topology evidence="2">Single-pass type II membrane protein</topology>
    </subcellularLocation>
</comment>
<comment type="PTM">
    <text evidence="2">N-glycosylated.</text>
</comment>
<comment type="similarity">
    <text evidence="7">Belongs to the peptidase S1 family.</text>
</comment>
<gene>
    <name evidence="11" type="primary">Tmprss7</name>
</gene>
<name>TMPS7_RAT</name>
<proteinExistence type="inferred from homology"/>
<keyword id="KW-1003">Cell membrane</keyword>
<keyword id="KW-1015">Disulfide bond</keyword>
<keyword id="KW-0325">Glycoprotein</keyword>
<keyword id="KW-0378">Hydrolase</keyword>
<keyword id="KW-0472">Membrane</keyword>
<keyword id="KW-0645">Protease</keyword>
<keyword id="KW-1185">Reference proteome</keyword>
<keyword id="KW-0677">Repeat</keyword>
<keyword id="KW-0720">Serine protease</keyword>
<keyword id="KW-0735">Signal-anchor</keyword>
<keyword id="KW-0812">Transmembrane</keyword>
<keyword id="KW-1133">Transmembrane helix</keyword>
<keyword id="KW-0865">Zymogen</keyword>
<reference evidence="10" key="1">
    <citation type="journal article" date="2004" name="Nature">
        <title>Genome sequence of the Brown Norway rat yields insights into mammalian evolution.</title>
        <authorList>
            <person name="Gibbs R.A."/>
            <person name="Weinstock G.M."/>
            <person name="Metzker M.L."/>
            <person name="Muzny D.M."/>
            <person name="Sodergren E.J."/>
            <person name="Scherer S."/>
            <person name="Scott G."/>
            <person name="Steffen D."/>
            <person name="Worley K.C."/>
            <person name="Burch P.E."/>
            <person name="Okwuonu G."/>
            <person name="Hines S."/>
            <person name="Lewis L."/>
            <person name="Deramo C."/>
            <person name="Delgado O."/>
            <person name="Dugan-Rocha S."/>
            <person name="Miner G."/>
            <person name="Morgan M."/>
            <person name="Hawes A."/>
            <person name="Gill R."/>
            <person name="Holt R.A."/>
            <person name="Adams M.D."/>
            <person name="Amanatides P.G."/>
            <person name="Baden-Tillson H."/>
            <person name="Barnstead M."/>
            <person name="Chin S."/>
            <person name="Evans C.A."/>
            <person name="Ferriera S."/>
            <person name="Fosler C."/>
            <person name="Glodek A."/>
            <person name="Gu Z."/>
            <person name="Jennings D."/>
            <person name="Kraft C.L."/>
            <person name="Nguyen T."/>
            <person name="Pfannkoch C.M."/>
            <person name="Sitter C."/>
            <person name="Sutton G.G."/>
            <person name="Venter J.C."/>
            <person name="Woodage T."/>
            <person name="Smith D."/>
            <person name="Lee H.-M."/>
            <person name="Gustafson E."/>
            <person name="Cahill P."/>
            <person name="Kana A."/>
            <person name="Doucette-Stamm L."/>
            <person name="Weinstock K."/>
            <person name="Fechtel K."/>
            <person name="Weiss R.B."/>
            <person name="Dunn D.M."/>
            <person name="Green E.D."/>
            <person name="Blakesley R.W."/>
            <person name="Bouffard G.G."/>
            <person name="De Jong P.J."/>
            <person name="Osoegawa K."/>
            <person name="Zhu B."/>
            <person name="Marra M."/>
            <person name="Schein J."/>
            <person name="Bosdet I."/>
            <person name="Fjell C."/>
            <person name="Jones S."/>
            <person name="Krzywinski M."/>
            <person name="Mathewson C."/>
            <person name="Siddiqui A."/>
            <person name="Wye N."/>
            <person name="McPherson J."/>
            <person name="Zhao S."/>
            <person name="Fraser C.M."/>
            <person name="Shetty J."/>
            <person name="Shatsman S."/>
            <person name="Geer K."/>
            <person name="Chen Y."/>
            <person name="Abramzon S."/>
            <person name="Nierman W.C."/>
            <person name="Havlak P.H."/>
            <person name="Chen R."/>
            <person name="Durbin K.J."/>
            <person name="Egan A."/>
            <person name="Ren Y."/>
            <person name="Song X.-Z."/>
            <person name="Li B."/>
            <person name="Liu Y."/>
            <person name="Qin X."/>
            <person name="Cawley S."/>
            <person name="Cooney A.J."/>
            <person name="D'Souza L.M."/>
            <person name="Martin K."/>
            <person name="Wu J.Q."/>
            <person name="Gonzalez-Garay M.L."/>
            <person name="Jackson A.R."/>
            <person name="Kalafus K.J."/>
            <person name="McLeod M.P."/>
            <person name="Milosavljevic A."/>
            <person name="Virk D."/>
            <person name="Volkov A."/>
            <person name="Wheeler D.A."/>
            <person name="Zhang Z."/>
            <person name="Bailey J.A."/>
            <person name="Eichler E.E."/>
            <person name="Tuzun E."/>
            <person name="Birney E."/>
            <person name="Mongin E."/>
            <person name="Ureta-Vidal A."/>
            <person name="Woodwark C."/>
            <person name="Zdobnov E."/>
            <person name="Bork P."/>
            <person name="Suyama M."/>
            <person name="Torrents D."/>
            <person name="Alexandersson M."/>
            <person name="Trask B.J."/>
            <person name="Young J.M."/>
            <person name="Huang H."/>
            <person name="Wang H."/>
            <person name="Xing H."/>
            <person name="Daniels S."/>
            <person name="Gietzen D."/>
            <person name="Schmidt J."/>
            <person name="Stevens K."/>
            <person name="Vitt U."/>
            <person name="Wingrove J."/>
            <person name="Camara F."/>
            <person name="Mar Alba M."/>
            <person name="Abril J.F."/>
            <person name="Guigo R."/>
            <person name="Smit A."/>
            <person name="Dubchak I."/>
            <person name="Rubin E.M."/>
            <person name="Couronne O."/>
            <person name="Poliakov A."/>
            <person name="Huebner N."/>
            <person name="Ganten D."/>
            <person name="Goesele C."/>
            <person name="Hummel O."/>
            <person name="Kreitler T."/>
            <person name="Lee Y.-A."/>
            <person name="Monti J."/>
            <person name="Schulz H."/>
            <person name="Zimdahl H."/>
            <person name="Himmelbauer H."/>
            <person name="Lehrach H."/>
            <person name="Jacob H.J."/>
            <person name="Bromberg S."/>
            <person name="Gullings-Handley J."/>
            <person name="Jensen-Seaman M.I."/>
            <person name="Kwitek A.E."/>
            <person name="Lazar J."/>
            <person name="Pasko D."/>
            <person name="Tonellato P.J."/>
            <person name="Twigger S."/>
            <person name="Ponting C.P."/>
            <person name="Duarte J.M."/>
            <person name="Rice S."/>
            <person name="Goodstadt L."/>
            <person name="Beatson S.A."/>
            <person name="Emes R.D."/>
            <person name="Winter E.E."/>
            <person name="Webber C."/>
            <person name="Brandt P."/>
            <person name="Nyakatura G."/>
            <person name="Adetobi M."/>
            <person name="Chiaromonte F."/>
            <person name="Elnitski L."/>
            <person name="Eswara P."/>
            <person name="Hardison R.C."/>
            <person name="Hou M."/>
            <person name="Kolbe D."/>
            <person name="Makova K."/>
            <person name="Miller W."/>
            <person name="Nekrutenko A."/>
            <person name="Riemer C."/>
            <person name="Schwartz S."/>
            <person name="Taylor J."/>
            <person name="Yang S."/>
            <person name="Zhang Y."/>
            <person name="Lindpaintner K."/>
            <person name="Andrews T.D."/>
            <person name="Caccamo M."/>
            <person name="Clamp M."/>
            <person name="Clarke L."/>
            <person name="Curwen V."/>
            <person name="Durbin R.M."/>
            <person name="Eyras E."/>
            <person name="Searle S.M."/>
            <person name="Cooper G.M."/>
            <person name="Batzoglou S."/>
            <person name="Brudno M."/>
            <person name="Sidow A."/>
            <person name="Stone E.A."/>
            <person name="Payseur B.A."/>
            <person name="Bourque G."/>
            <person name="Lopez-Otin C."/>
            <person name="Puente X.S."/>
            <person name="Chakrabarti K."/>
            <person name="Chatterji S."/>
            <person name="Dewey C."/>
            <person name="Pachter L."/>
            <person name="Bray N."/>
            <person name="Yap V.B."/>
            <person name="Caspi A."/>
            <person name="Tesler G."/>
            <person name="Pevzner P.A."/>
            <person name="Haussler D."/>
            <person name="Roskin K.M."/>
            <person name="Baertsch R."/>
            <person name="Clawson H."/>
            <person name="Furey T.S."/>
            <person name="Hinrichs A.S."/>
            <person name="Karolchik D."/>
            <person name="Kent W.J."/>
            <person name="Rosenbloom K.R."/>
            <person name="Trumbower H."/>
            <person name="Weirauch M."/>
            <person name="Cooper D.N."/>
            <person name="Stenson P.D."/>
            <person name="Ma B."/>
            <person name="Brent M."/>
            <person name="Arumugam M."/>
            <person name="Shteynberg D."/>
            <person name="Copley R.R."/>
            <person name="Taylor M.S."/>
            <person name="Riethman H."/>
            <person name="Mudunuri U."/>
            <person name="Peterson J."/>
            <person name="Guyer M."/>
            <person name="Felsenfeld A."/>
            <person name="Old S."/>
            <person name="Mockrin S."/>
            <person name="Collins F.S."/>
        </authorList>
    </citation>
    <scope>NUCLEOTIDE SEQUENCE [LARGE SCALE GENOMIC DNA]</scope>
    <source>
        <strain evidence="9">Brown Norway</strain>
    </source>
</reference>
<feature type="chain" id="PRO_0000356158" description="Transmembrane protease serine 7">
    <location>
        <begin position="1"/>
        <end position="833"/>
    </location>
</feature>
<feature type="topological domain" description="Cytoplasmic" evidence="3">
    <location>
        <begin position="1"/>
        <end position="62"/>
    </location>
</feature>
<feature type="transmembrane region" description="Helical; Signal-anchor for type II membrane protein" evidence="3">
    <location>
        <begin position="63"/>
        <end position="83"/>
    </location>
</feature>
<feature type="topological domain" description="Extracellular" evidence="3">
    <location>
        <begin position="84"/>
        <end position="829"/>
    </location>
</feature>
<feature type="domain" description="SEA" evidence="6">
    <location>
        <begin position="92"/>
        <end position="220"/>
    </location>
</feature>
<feature type="domain" description="CUB 1" evidence="4">
    <location>
        <begin position="233"/>
        <end position="350"/>
    </location>
</feature>
<feature type="domain" description="CUB 2" evidence="4">
    <location>
        <begin position="355"/>
        <end position="471"/>
    </location>
</feature>
<feature type="domain" description="LDL-receptor class A 1" evidence="5">
    <location>
        <begin position="473"/>
        <end position="509"/>
    </location>
</feature>
<feature type="domain" description="LDL-receptor class A 2" evidence="5">
    <location>
        <begin position="548"/>
        <end position="585"/>
    </location>
</feature>
<feature type="domain" description="Peptidase S1" evidence="7">
    <location>
        <begin position="596"/>
        <end position="830"/>
    </location>
</feature>
<feature type="region of interest" description="Disordered" evidence="8">
    <location>
        <begin position="30"/>
        <end position="49"/>
    </location>
</feature>
<feature type="compositionally biased region" description="Basic residues" evidence="8">
    <location>
        <begin position="32"/>
        <end position="49"/>
    </location>
</feature>
<feature type="active site" description="Charge relay system" evidence="3">
    <location>
        <position position="636"/>
    </location>
</feature>
<feature type="active site" description="Charge relay system" evidence="3">
    <location>
        <position position="684"/>
    </location>
</feature>
<feature type="active site" description="Charge relay system" evidence="3">
    <location>
        <position position="780"/>
    </location>
</feature>
<feature type="site" description="Cleavage" evidence="3">
    <location>
        <begin position="255"/>
        <end position="256"/>
    </location>
</feature>
<feature type="glycosylation site" description="N-linked (GlcNAc...) asparagine" evidence="3">
    <location>
        <position position="196"/>
    </location>
</feature>
<feature type="glycosylation site" description="N-linked (GlcNAc...) asparagine" evidence="3">
    <location>
        <position position="405"/>
    </location>
</feature>
<feature type="glycosylation site" description="N-linked (GlcNAc...) asparagine" evidence="3">
    <location>
        <position position="469"/>
    </location>
</feature>
<feature type="disulfide bond" evidence="3">
    <location>
        <begin position="233"/>
        <end position="259"/>
    </location>
</feature>
<feature type="disulfide bond" evidence="3">
    <location>
        <begin position="285"/>
        <end position="312"/>
    </location>
</feature>
<feature type="disulfide bond" evidence="3">
    <location>
        <begin position="355"/>
        <end position="386"/>
    </location>
</feature>
<feature type="disulfide bond" evidence="3">
    <location>
        <begin position="474"/>
        <end position="486"/>
    </location>
</feature>
<feature type="disulfide bond" evidence="3">
    <location>
        <begin position="481"/>
        <end position="499"/>
    </location>
</feature>
<feature type="disulfide bond" evidence="3">
    <location>
        <begin position="493"/>
        <end position="508"/>
    </location>
</feature>
<feature type="disulfide bond" evidence="3">
    <location>
        <begin position="549"/>
        <end position="561"/>
    </location>
</feature>
<feature type="disulfide bond" evidence="3">
    <location>
        <begin position="556"/>
        <end position="575"/>
    </location>
</feature>
<feature type="disulfide bond" evidence="3">
    <location>
        <begin position="569"/>
        <end position="584"/>
    </location>
</feature>
<feature type="disulfide bond" evidence="3">
    <location>
        <begin position="621"/>
        <end position="637"/>
    </location>
</feature>
<feature type="disulfide bond" evidence="3">
    <location>
        <begin position="720"/>
        <end position="786"/>
    </location>
</feature>
<feature type="disulfide bond" evidence="3">
    <location>
        <begin position="752"/>
        <end position="765"/>
    </location>
</feature>
<feature type="disulfide bond" evidence="3">
    <location>
        <begin position="776"/>
        <end position="806"/>
    </location>
</feature>
<evidence type="ECO:0000250" key="1"/>
<evidence type="ECO:0000250" key="2">
    <source>
        <dbReference type="UniProtKB" id="Q8BIK6"/>
    </source>
</evidence>
<evidence type="ECO:0000255" key="3"/>
<evidence type="ECO:0000255" key="4">
    <source>
        <dbReference type="PROSITE-ProRule" id="PRU00059"/>
    </source>
</evidence>
<evidence type="ECO:0000255" key="5">
    <source>
        <dbReference type="PROSITE-ProRule" id="PRU00124"/>
    </source>
</evidence>
<evidence type="ECO:0000255" key="6">
    <source>
        <dbReference type="PROSITE-ProRule" id="PRU00188"/>
    </source>
</evidence>
<evidence type="ECO:0000255" key="7">
    <source>
        <dbReference type="PROSITE-ProRule" id="PRU00274"/>
    </source>
</evidence>
<evidence type="ECO:0000256" key="8">
    <source>
        <dbReference type="SAM" id="MobiDB-lite"/>
    </source>
</evidence>
<evidence type="ECO:0000269" key="9">
    <source>
    </source>
</evidence>
<evidence type="ECO:0000305" key="10"/>
<evidence type="ECO:0000312" key="11">
    <source>
        <dbReference type="RGD" id="1304655"/>
    </source>
</evidence>
<protein>
    <recommendedName>
        <fullName>Transmembrane protease serine 7</fullName>
        <ecNumber>3.4.21.-</ecNumber>
    </recommendedName>
    <alternativeName>
        <fullName evidence="2">Matriptase-3</fullName>
    </alternativeName>
</protein>
<sequence>MDKEKSDPSCKSSDLKISNISIQVVSVPGKLPGRRLPRKPIGKARPRKQPKKRAPFWNVQNKIILFTVFLFILAVTAWTLLWLYISKTDSKDAFYFVGMFRITNIEFLPEYRQKESREFLSMAKTVQQVVNLVYTTSAFSKFYKQSVVADVSSNNKGGLLVHFWIVFVMPHAKGHIFCEECVAAILKDSIQTSITNRTSVGTLQGLAVDMDSVVLNAGLRSDYSSAVGSDNGCSQYFYADHLTLRYPLEISATSGQLMCHFKLVAIVGYLIRLSIESIQLEADNCITDSLTVYDSLLPIRITCVLLSGYRICEPTRTLMSFVSTNNLMLVTLKSPYVRRLAGIRAYFEVIPEQKCENTILVKEINSFEGKISSPYYPSYYPPKCKCNWTFQTSLSTLGIALKFHNYSITKKSMKGCEHGWWEINEHMYCGSYMDHETIFRVPSPLVHIQLQCSSRLSDKPLLVEYGSYNISQPCPAGSFRCSSGLCVPQAQRCDGVNDCFDESDELFCVTAKPACNTSIFRQHGPLVCDGFQDCEDGQDEQNCTRSIPCTNRTFKCGNDICFRKQNAQCDGIVDCPDRSDEEGCGCSRSSPFLHRVVGGSDSQEGTWPWQVSLHFVGSAHCGASVISREWLLSAAHCFHGNRLSDPTPWTAHLGMYVQGNAKFVSPVRRIVVHEYYNSQTFDYDIALLQLSIAWPETLRQLIQPICIPPVGQRVRSGEKCWVTGWGRRHEADSKGSPILQQAEVELIDQTVCVSTYGIITSRMLCAGVMSGKSDACKGDSGGPLSCRRKSDGKWILTGIVSWGYGCGRPNFPGVYTRVSNFVPWIHKYVPSLL</sequence>
<dbReference type="EC" id="3.4.21.-"/>
<dbReference type="EMBL" id="AABR03078747">
    <property type="status" value="NOT_ANNOTATED_CDS"/>
    <property type="molecule type" value="Genomic_DNA"/>
</dbReference>
<dbReference type="EMBL" id="AABR03079133">
    <property type="status" value="NOT_ANNOTATED_CDS"/>
    <property type="molecule type" value="Genomic_DNA"/>
</dbReference>
<dbReference type="SMR" id="P86091"/>
<dbReference type="FunCoup" id="P86091">
    <property type="interactions" value="4"/>
</dbReference>
<dbReference type="STRING" id="10116.ENSRNOP00000041453"/>
<dbReference type="GlyCosmos" id="P86091">
    <property type="glycosylation" value="3 sites, No reported glycans"/>
</dbReference>
<dbReference type="GlyGen" id="P86091">
    <property type="glycosylation" value="3 sites"/>
</dbReference>
<dbReference type="PhosphoSitePlus" id="P86091"/>
<dbReference type="PaxDb" id="10116-ENSRNOP00000041453"/>
<dbReference type="UCSC" id="RGD:1304655">
    <property type="organism name" value="rat"/>
</dbReference>
<dbReference type="AGR" id="RGD:1304655"/>
<dbReference type="RGD" id="1304655">
    <property type="gene designation" value="Tmprss7"/>
</dbReference>
<dbReference type="eggNOG" id="KOG3627">
    <property type="taxonomic scope" value="Eukaryota"/>
</dbReference>
<dbReference type="InParanoid" id="P86091"/>
<dbReference type="PhylomeDB" id="P86091"/>
<dbReference type="TreeFam" id="TF330647"/>
<dbReference type="PRO" id="PR:P86091"/>
<dbReference type="Proteomes" id="UP000002494">
    <property type="component" value="Unplaced"/>
</dbReference>
<dbReference type="GO" id="GO:0005886">
    <property type="term" value="C:plasma membrane"/>
    <property type="evidence" value="ECO:0000266"/>
    <property type="project" value="RGD"/>
</dbReference>
<dbReference type="GO" id="GO:0004252">
    <property type="term" value="F:serine-type endopeptidase activity"/>
    <property type="evidence" value="ECO:0007669"/>
    <property type="project" value="InterPro"/>
</dbReference>
<dbReference type="GO" id="GO:0008236">
    <property type="term" value="F:serine-type peptidase activity"/>
    <property type="evidence" value="ECO:0000266"/>
    <property type="project" value="RGD"/>
</dbReference>
<dbReference type="GO" id="GO:0006508">
    <property type="term" value="P:proteolysis"/>
    <property type="evidence" value="ECO:0000266"/>
    <property type="project" value="RGD"/>
</dbReference>
<dbReference type="CDD" id="cd00041">
    <property type="entry name" value="CUB"/>
    <property type="match status" value="1"/>
</dbReference>
<dbReference type="CDD" id="cd00112">
    <property type="entry name" value="LDLa"/>
    <property type="match status" value="2"/>
</dbReference>
<dbReference type="CDD" id="cd00190">
    <property type="entry name" value="Tryp_SPc"/>
    <property type="match status" value="1"/>
</dbReference>
<dbReference type="FunFam" id="2.60.120.290:FF:000033">
    <property type="entry name" value="Transmembrane protease serine 7"/>
    <property type="match status" value="1"/>
</dbReference>
<dbReference type="FunFam" id="4.10.400.10:FF:000065">
    <property type="entry name" value="Transmembrane protease serine 7"/>
    <property type="match status" value="1"/>
</dbReference>
<dbReference type="FunFam" id="3.30.70.960:FF:000005">
    <property type="entry name" value="transmembrane protease serine 7"/>
    <property type="match status" value="1"/>
</dbReference>
<dbReference type="FunFam" id="2.40.10.10:FF:000003">
    <property type="entry name" value="Transmembrane serine protease 3"/>
    <property type="match status" value="1"/>
</dbReference>
<dbReference type="FunFam" id="2.60.120.290:FF:000040">
    <property type="entry name" value="Transmembrane serine protease 7"/>
    <property type="match status" value="1"/>
</dbReference>
<dbReference type="FunFam" id="4.10.400.10:FF:000109">
    <property type="entry name" value="Transmembrane serine protease 7"/>
    <property type="match status" value="1"/>
</dbReference>
<dbReference type="Gene3D" id="4.10.400.10">
    <property type="entry name" value="Low-density Lipoprotein Receptor"/>
    <property type="match status" value="3"/>
</dbReference>
<dbReference type="Gene3D" id="3.30.70.960">
    <property type="entry name" value="SEA domain"/>
    <property type="match status" value="1"/>
</dbReference>
<dbReference type="Gene3D" id="2.60.120.290">
    <property type="entry name" value="Spermadhesin, CUB domain"/>
    <property type="match status" value="2"/>
</dbReference>
<dbReference type="Gene3D" id="2.40.10.10">
    <property type="entry name" value="Trypsin-like serine proteases"/>
    <property type="match status" value="2"/>
</dbReference>
<dbReference type="InterPro" id="IPR000859">
    <property type="entry name" value="CUB_dom"/>
</dbReference>
<dbReference type="InterPro" id="IPR036055">
    <property type="entry name" value="LDL_receptor-like_sf"/>
</dbReference>
<dbReference type="InterPro" id="IPR023415">
    <property type="entry name" value="LDLR_class-A_CS"/>
</dbReference>
<dbReference type="InterPro" id="IPR002172">
    <property type="entry name" value="LDrepeatLR_classA_rpt"/>
</dbReference>
<dbReference type="InterPro" id="IPR009003">
    <property type="entry name" value="Peptidase_S1_PA"/>
</dbReference>
<dbReference type="InterPro" id="IPR043504">
    <property type="entry name" value="Peptidase_S1_PA_chymotrypsin"/>
</dbReference>
<dbReference type="InterPro" id="IPR001314">
    <property type="entry name" value="Peptidase_S1A"/>
</dbReference>
<dbReference type="InterPro" id="IPR000082">
    <property type="entry name" value="SEA_dom"/>
</dbReference>
<dbReference type="InterPro" id="IPR036364">
    <property type="entry name" value="SEA_dom_sf"/>
</dbReference>
<dbReference type="InterPro" id="IPR035914">
    <property type="entry name" value="Sperma_CUB_dom_sf"/>
</dbReference>
<dbReference type="InterPro" id="IPR001254">
    <property type="entry name" value="Trypsin_dom"/>
</dbReference>
<dbReference type="InterPro" id="IPR018114">
    <property type="entry name" value="TRYPSIN_HIS"/>
</dbReference>
<dbReference type="InterPro" id="IPR033116">
    <property type="entry name" value="TRYPSIN_SER"/>
</dbReference>
<dbReference type="PANTHER" id="PTHR24252">
    <property type="entry name" value="ACROSIN-RELATED"/>
    <property type="match status" value="1"/>
</dbReference>
<dbReference type="PANTHER" id="PTHR24252:SF12">
    <property type="entry name" value="TRANSMEMBRANE SERINE PROTEASE 7"/>
    <property type="match status" value="1"/>
</dbReference>
<dbReference type="Pfam" id="PF00431">
    <property type="entry name" value="CUB"/>
    <property type="match status" value="1"/>
</dbReference>
<dbReference type="Pfam" id="PF00057">
    <property type="entry name" value="Ldl_recept_a"/>
    <property type="match status" value="2"/>
</dbReference>
<dbReference type="Pfam" id="PF01390">
    <property type="entry name" value="SEA"/>
    <property type="match status" value="1"/>
</dbReference>
<dbReference type="Pfam" id="PF00089">
    <property type="entry name" value="Trypsin"/>
    <property type="match status" value="1"/>
</dbReference>
<dbReference type="PRINTS" id="PR00722">
    <property type="entry name" value="CHYMOTRYPSIN"/>
</dbReference>
<dbReference type="SMART" id="SM00192">
    <property type="entry name" value="LDLa"/>
    <property type="match status" value="3"/>
</dbReference>
<dbReference type="SMART" id="SM00020">
    <property type="entry name" value="Tryp_SPc"/>
    <property type="match status" value="1"/>
</dbReference>
<dbReference type="SUPFAM" id="SSF57424">
    <property type="entry name" value="LDL receptor-like module"/>
    <property type="match status" value="2"/>
</dbReference>
<dbReference type="SUPFAM" id="SSF82671">
    <property type="entry name" value="SEA domain"/>
    <property type="match status" value="1"/>
</dbReference>
<dbReference type="SUPFAM" id="SSF49854">
    <property type="entry name" value="Spermadhesin, CUB domain"/>
    <property type="match status" value="2"/>
</dbReference>
<dbReference type="SUPFAM" id="SSF50494">
    <property type="entry name" value="Trypsin-like serine proteases"/>
    <property type="match status" value="1"/>
</dbReference>
<dbReference type="PROSITE" id="PS01180">
    <property type="entry name" value="CUB"/>
    <property type="match status" value="2"/>
</dbReference>
<dbReference type="PROSITE" id="PS01209">
    <property type="entry name" value="LDLRA_1"/>
    <property type="match status" value="1"/>
</dbReference>
<dbReference type="PROSITE" id="PS50068">
    <property type="entry name" value="LDLRA_2"/>
    <property type="match status" value="2"/>
</dbReference>
<dbReference type="PROSITE" id="PS50024">
    <property type="entry name" value="SEA"/>
    <property type="match status" value="1"/>
</dbReference>
<dbReference type="PROSITE" id="PS50240">
    <property type="entry name" value="TRYPSIN_DOM"/>
    <property type="match status" value="1"/>
</dbReference>
<dbReference type="PROSITE" id="PS00134">
    <property type="entry name" value="TRYPSIN_HIS"/>
    <property type="match status" value="1"/>
</dbReference>
<dbReference type="PROSITE" id="PS00135">
    <property type="entry name" value="TRYPSIN_SER"/>
    <property type="match status" value="1"/>
</dbReference>
<accession>P86091</accession>
<organism>
    <name type="scientific">Rattus norvegicus</name>
    <name type="common">Rat</name>
    <dbReference type="NCBI Taxonomy" id="10116"/>
    <lineage>
        <taxon>Eukaryota</taxon>
        <taxon>Metazoa</taxon>
        <taxon>Chordata</taxon>
        <taxon>Craniata</taxon>
        <taxon>Vertebrata</taxon>
        <taxon>Euteleostomi</taxon>
        <taxon>Mammalia</taxon>
        <taxon>Eutheria</taxon>
        <taxon>Euarchontoglires</taxon>
        <taxon>Glires</taxon>
        <taxon>Rodentia</taxon>
        <taxon>Myomorpha</taxon>
        <taxon>Muroidea</taxon>
        <taxon>Muridae</taxon>
        <taxon>Murinae</taxon>
        <taxon>Rattus</taxon>
    </lineage>
</organism>